<name>PFKA_YERE8</name>
<dbReference type="EC" id="2.7.1.11" evidence="1"/>
<dbReference type="EMBL" id="AM286415">
    <property type="protein sequence ID" value="CAL10231.1"/>
    <property type="molecule type" value="Genomic_DNA"/>
</dbReference>
<dbReference type="RefSeq" id="WP_011815284.1">
    <property type="nucleotide sequence ID" value="NC_008800.1"/>
</dbReference>
<dbReference type="RefSeq" id="YP_001004483.1">
    <property type="nucleotide sequence ID" value="NC_008800.1"/>
</dbReference>
<dbReference type="SMR" id="A1JHZ3"/>
<dbReference type="KEGG" id="yen:YE0089"/>
<dbReference type="PATRIC" id="fig|393305.7.peg.179"/>
<dbReference type="eggNOG" id="COG0205">
    <property type="taxonomic scope" value="Bacteria"/>
</dbReference>
<dbReference type="HOGENOM" id="CLU_020655_0_1_6"/>
<dbReference type="OrthoDB" id="9802503at2"/>
<dbReference type="UniPathway" id="UPA00109">
    <property type="reaction ID" value="UER00182"/>
</dbReference>
<dbReference type="Proteomes" id="UP000000642">
    <property type="component" value="Chromosome"/>
</dbReference>
<dbReference type="GO" id="GO:0005945">
    <property type="term" value="C:6-phosphofructokinase complex"/>
    <property type="evidence" value="ECO:0007669"/>
    <property type="project" value="TreeGrafter"/>
</dbReference>
<dbReference type="GO" id="GO:0003872">
    <property type="term" value="F:6-phosphofructokinase activity"/>
    <property type="evidence" value="ECO:0007669"/>
    <property type="project" value="UniProtKB-UniRule"/>
</dbReference>
<dbReference type="GO" id="GO:0016208">
    <property type="term" value="F:AMP binding"/>
    <property type="evidence" value="ECO:0007669"/>
    <property type="project" value="TreeGrafter"/>
</dbReference>
<dbReference type="GO" id="GO:0005524">
    <property type="term" value="F:ATP binding"/>
    <property type="evidence" value="ECO:0007669"/>
    <property type="project" value="UniProtKB-KW"/>
</dbReference>
<dbReference type="GO" id="GO:0070095">
    <property type="term" value="F:fructose-6-phosphate binding"/>
    <property type="evidence" value="ECO:0007669"/>
    <property type="project" value="TreeGrafter"/>
</dbReference>
<dbReference type="GO" id="GO:0042802">
    <property type="term" value="F:identical protein binding"/>
    <property type="evidence" value="ECO:0007669"/>
    <property type="project" value="TreeGrafter"/>
</dbReference>
<dbReference type="GO" id="GO:0046872">
    <property type="term" value="F:metal ion binding"/>
    <property type="evidence" value="ECO:0007669"/>
    <property type="project" value="UniProtKB-KW"/>
</dbReference>
<dbReference type="GO" id="GO:0048029">
    <property type="term" value="F:monosaccharide binding"/>
    <property type="evidence" value="ECO:0007669"/>
    <property type="project" value="TreeGrafter"/>
</dbReference>
<dbReference type="GO" id="GO:0061621">
    <property type="term" value="P:canonical glycolysis"/>
    <property type="evidence" value="ECO:0007669"/>
    <property type="project" value="TreeGrafter"/>
</dbReference>
<dbReference type="GO" id="GO:0030388">
    <property type="term" value="P:fructose 1,6-bisphosphate metabolic process"/>
    <property type="evidence" value="ECO:0007669"/>
    <property type="project" value="TreeGrafter"/>
</dbReference>
<dbReference type="GO" id="GO:0006002">
    <property type="term" value="P:fructose 6-phosphate metabolic process"/>
    <property type="evidence" value="ECO:0007669"/>
    <property type="project" value="InterPro"/>
</dbReference>
<dbReference type="FunFam" id="3.40.50.450:FF:000001">
    <property type="entry name" value="ATP-dependent 6-phosphofructokinase"/>
    <property type="match status" value="1"/>
</dbReference>
<dbReference type="FunFam" id="3.40.50.460:FF:000002">
    <property type="entry name" value="ATP-dependent 6-phosphofructokinase"/>
    <property type="match status" value="1"/>
</dbReference>
<dbReference type="Gene3D" id="3.40.50.450">
    <property type="match status" value="1"/>
</dbReference>
<dbReference type="Gene3D" id="3.40.50.460">
    <property type="entry name" value="Phosphofructokinase domain"/>
    <property type="match status" value="1"/>
</dbReference>
<dbReference type="HAMAP" id="MF_00339">
    <property type="entry name" value="Phosphofructokinase_I_B1"/>
    <property type="match status" value="1"/>
</dbReference>
<dbReference type="InterPro" id="IPR022953">
    <property type="entry name" value="ATP_PFK"/>
</dbReference>
<dbReference type="InterPro" id="IPR012003">
    <property type="entry name" value="ATP_PFK_prok-type"/>
</dbReference>
<dbReference type="InterPro" id="IPR012828">
    <property type="entry name" value="PFKA_ATP_prok"/>
</dbReference>
<dbReference type="InterPro" id="IPR015912">
    <property type="entry name" value="Phosphofructokinase_CS"/>
</dbReference>
<dbReference type="InterPro" id="IPR000023">
    <property type="entry name" value="Phosphofructokinase_dom"/>
</dbReference>
<dbReference type="InterPro" id="IPR035966">
    <property type="entry name" value="PKF_sf"/>
</dbReference>
<dbReference type="NCBIfam" id="TIGR02482">
    <property type="entry name" value="PFKA_ATP"/>
    <property type="match status" value="1"/>
</dbReference>
<dbReference type="NCBIfam" id="NF002872">
    <property type="entry name" value="PRK03202.1"/>
    <property type="match status" value="1"/>
</dbReference>
<dbReference type="PANTHER" id="PTHR13697:SF4">
    <property type="entry name" value="ATP-DEPENDENT 6-PHOSPHOFRUCTOKINASE"/>
    <property type="match status" value="1"/>
</dbReference>
<dbReference type="PANTHER" id="PTHR13697">
    <property type="entry name" value="PHOSPHOFRUCTOKINASE"/>
    <property type="match status" value="1"/>
</dbReference>
<dbReference type="Pfam" id="PF00365">
    <property type="entry name" value="PFK"/>
    <property type="match status" value="1"/>
</dbReference>
<dbReference type="PIRSF" id="PIRSF000532">
    <property type="entry name" value="ATP_PFK_prok"/>
    <property type="match status" value="1"/>
</dbReference>
<dbReference type="PRINTS" id="PR00476">
    <property type="entry name" value="PHFRCTKINASE"/>
</dbReference>
<dbReference type="SUPFAM" id="SSF53784">
    <property type="entry name" value="Phosphofructokinase"/>
    <property type="match status" value="1"/>
</dbReference>
<dbReference type="PROSITE" id="PS00433">
    <property type="entry name" value="PHOSPHOFRUCTOKINASE"/>
    <property type="match status" value="1"/>
</dbReference>
<evidence type="ECO:0000255" key="1">
    <source>
        <dbReference type="HAMAP-Rule" id="MF_00339"/>
    </source>
</evidence>
<feature type="chain" id="PRO_1000059810" description="ATP-dependent 6-phosphofructokinase">
    <location>
        <begin position="1"/>
        <end position="331"/>
    </location>
</feature>
<feature type="active site" description="Proton acceptor" evidence="1">
    <location>
        <position position="129"/>
    </location>
</feature>
<feature type="binding site" evidence="1">
    <location>
        <position position="12"/>
    </location>
    <ligand>
        <name>ATP</name>
        <dbReference type="ChEBI" id="CHEBI:30616"/>
    </ligand>
</feature>
<feature type="binding site" evidence="1">
    <location>
        <begin position="22"/>
        <end position="26"/>
    </location>
    <ligand>
        <name>ADP</name>
        <dbReference type="ChEBI" id="CHEBI:456216"/>
        <note>allosteric activator; ligand shared between dimeric partners</note>
    </ligand>
</feature>
<feature type="binding site" evidence="1">
    <location>
        <begin position="55"/>
        <end position="60"/>
    </location>
    <ligand>
        <name>ADP</name>
        <dbReference type="ChEBI" id="CHEBI:456216"/>
        <note>allosteric activator; ligand shared between dimeric partners</note>
    </ligand>
</feature>
<feature type="binding site" evidence="1">
    <location>
        <begin position="73"/>
        <end position="74"/>
    </location>
    <ligand>
        <name>ATP</name>
        <dbReference type="ChEBI" id="CHEBI:30616"/>
    </ligand>
</feature>
<feature type="binding site" evidence="1">
    <location>
        <begin position="103"/>
        <end position="106"/>
    </location>
    <ligand>
        <name>ATP</name>
        <dbReference type="ChEBI" id="CHEBI:30616"/>
    </ligand>
</feature>
<feature type="binding site" evidence="1">
    <location>
        <position position="104"/>
    </location>
    <ligand>
        <name>Mg(2+)</name>
        <dbReference type="ChEBI" id="CHEBI:18420"/>
        <note>catalytic</note>
    </ligand>
</feature>
<feature type="binding site" description="in other chain" evidence="1">
    <location>
        <begin position="127"/>
        <end position="129"/>
    </location>
    <ligand>
        <name>substrate</name>
        <note>ligand shared between dimeric partners</note>
    </ligand>
</feature>
<feature type="binding site" description="in other chain" evidence="1">
    <location>
        <position position="156"/>
    </location>
    <ligand>
        <name>ADP</name>
        <dbReference type="ChEBI" id="CHEBI:456216"/>
        <note>allosteric activator; ligand shared between dimeric partners</note>
    </ligand>
</feature>
<feature type="binding site" evidence="1">
    <location>
        <position position="164"/>
    </location>
    <ligand>
        <name>substrate</name>
        <note>ligand shared between dimeric partners</note>
    </ligand>
</feature>
<feature type="binding site" description="in other chain" evidence="1">
    <location>
        <begin position="171"/>
        <end position="173"/>
    </location>
    <ligand>
        <name>substrate</name>
        <note>ligand shared between dimeric partners</note>
    </ligand>
</feature>
<feature type="binding site" description="in other chain" evidence="1">
    <location>
        <begin position="187"/>
        <end position="189"/>
    </location>
    <ligand>
        <name>ADP</name>
        <dbReference type="ChEBI" id="CHEBI:456216"/>
        <note>allosteric activator; ligand shared between dimeric partners</note>
    </ligand>
</feature>
<feature type="binding site" description="in other chain" evidence="1">
    <location>
        <position position="213"/>
    </location>
    <ligand>
        <name>ADP</name>
        <dbReference type="ChEBI" id="CHEBI:456216"/>
        <note>allosteric activator; ligand shared between dimeric partners</note>
    </ligand>
</feature>
<feature type="binding site" description="in other chain" evidence="1">
    <location>
        <begin position="215"/>
        <end position="217"/>
    </location>
    <ligand>
        <name>ADP</name>
        <dbReference type="ChEBI" id="CHEBI:456216"/>
        <note>allosteric activator; ligand shared between dimeric partners</note>
    </ligand>
</feature>
<feature type="binding site" description="in other chain" evidence="1">
    <location>
        <position position="224"/>
    </location>
    <ligand>
        <name>substrate</name>
        <note>ligand shared between dimeric partners</note>
    </ligand>
</feature>
<feature type="binding site" evidence="1">
    <location>
        <position position="245"/>
    </location>
    <ligand>
        <name>substrate</name>
        <note>ligand shared between dimeric partners</note>
    </ligand>
</feature>
<feature type="binding site" description="in other chain" evidence="1">
    <location>
        <begin position="251"/>
        <end position="254"/>
    </location>
    <ligand>
        <name>substrate</name>
        <note>ligand shared between dimeric partners</note>
    </ligand>
</feature>
<proteinExistence type="inferred from homology"/>
<comment type="function">
    <text evidence="1">Catalyzes the phosphorylation of D-fructose 6-phosphate to fructose 1,6-bisphosphate by ATP, the first committing step of glycolysis.</text>
</comment>
<comment type="catalytic activity">
    <reaction evidence="1">
        <text>beta-D-fructose 6-phosphate + ATP = beta-D-fructose 1,6-bisphosphate + ADP + H(+)</text>
        <dbReference type="Rhea" id="RHEA:16109"/>
        <dbReference type="ChEBI" id="CHEBI:15378"/>
        <dbReference type="ChEBI" id="CHEBI:30616"/>
        <dbReference type="ChEBI" id="CHEBI:32966"/>
        <dbReference type="ChEBI" id="CHEBI:57634"/>
        <dbReference type="ChEBI" id="CHEBI:456216"/>
        <dbReference type="EC" id="2.7.1.11"/>
    </reaction>
</comment>
<comment type="cofactor">
    <cofactor evidence="1">
        <name>Mg(2+)</name>
        <dbReference type="ChEBI" id="CHEBI:18420"/>
    </cofactor>
</comment>
<comment type="activity regulation">
    <text evidence="1">Allosterically activated by ADP and other diphosphonucleosides, and allosterically inhibited by phosphoenolpyruvate.</text>
</comment>
<comment type="pathway">
    <text evidence="1">Carbohydrate degradation; glycolysis; D-glyceraldehyde 3-phosphate and glycerone phosphate from D-glucose: step 3/4.</text>
</comment>
<comment type="subunit">
    <text evidence="1">Homotetramer.</text>
</comment>
<comment type="subcellular location">
    <subcellularLocation>
        <location evidence="1">Cytoplasm</location>
    </subcellularLocation>
</comment>
<comment type="similarity">
    <text evidence="1">Belongs to the phosphofructokinase type A (PFKA) family. ATP-dependent PFK group I subfamily. Prokaryotic clade 'B1' sub-subfamily.</text>
</comment>
<protein>
    <recommendedName>
        <fullName evidence="1">ATP-dependent 6-phosphofructokinase</fullName>
        <shortName evidence="1">ATP-PFK</shortName>
        <shortName evidence="1">Phosphofructokinase</shortName>
        <ecNumber evidence="1">2.7.1.11</ecNumber>
    </recommendedName>
    <alternativeName>
        <fullName evidence="1">Phosphohexokinase</fullName>
    </alternativeName>
</protein>
<reference key="1">
    <citation type="journal article" date="2006" name="PLoS Genet.">
        <title>The complete genome sequence and comparative genome analysis of the high pathogenicity Yersinia enterocolitica strain 8081.</title>
        <authorList>
            <person name="Thomson N.R."/>
            <person name="Howard S."/>
            <person name="Wren B.W."/>
            <person name="Holden M.T.G."/>
            <person name="Crossman L."/>
            <person name="Challis G.L."/>
            <person name="Churcher C."/>
            <person name="Mungall K."/>
            <person name="Brooks K."/>
            <person name="Chillingworth T."/>
            <person name="Feltwell T."/>
            <person name="Abdellah Z."/>
            <person name="Hauser H."/>
            <person name="Jagels K."/>
            <person name="Maddison M."/>
            <person name="Moule S."/>
            <person name="Sanders M."/>
            <person name="Whitehead S."/>
            <person name="Quail M.A."/>
            <person name="Dougan G."/>
            <person name="Parkhill J."/>
            <person name="Prentice M.B."/>
        </authorList>
    </citation>
    <scope>NUCLEOTIDE SEQUENCE [LARGE SCALE GENOMIC DNA]</scope>
    <source>
        <strain>NCTC 13174 / 8081</strain>
    </source>
</reference>
<accession>A1JHZ3</accession>
<sequence length="331" mass="35934">MVKKIGVLTSGGDAPGMNAAIRGVVRAALSEGLEVYGIEDGYLGLYHNRMKQLDRYSVSDMINRGGTFLGSARFPEFRDPEIRKIALQNMKERGIDGLVVIGGDGSYAGADLLTKEGGIHCVGLPGTIDNDVAGTDYTIGFFTALETVVEAIDRLRDTSSSHQRISIVEVMGRFCGDLTLAAAIAGGCEFIAIPEVEFKREDLVKEIKAGIAKGKKHAIVAITEKLDNIDELAKYIEKETDRETRGTVLGHIQRGGAPVAYDRILASRMGAYAVDLLVNKISPPLNFSSGGFCVGIQNEKMVHELISVCIAPENKKSKFKEDWYDTAKKLF</sequence>
<gene>
    <name evidence="1" type="primary">pfkA</name>
    <name type="ordered locus">YE0089</name>
</gene>
<keyword id="KW-0021">Allosteric enzyme</keyword>
<keyword id="KW-0067">ATP-binding</keyword>
<keyword id="KW-0963">Cytoplasm</keyword>
<keyword id="KW-0324">Glycolysis</keyword>
<keyword id="KW-0418">Kinase</keyword>
<keyword id="KW-0460">Magnesium</keyword>
<keyword id="KW-0479">Metal-binding</keyword>
<keyword id="KW-0547">Nucleotide-binding</keyword>
<keyword id="KW-0808">Transferase</keyword>
<organism>
    <name type="scientific">Yersinia enterocolitica serotype O:8 / biotype 1B (strain NCTC 13174 / 8081)</name>
    <dbReference type="NCBI Taxonomy" id="393305"/>
    <lineage>
        <taxon>Bacteria</taxon>
        <taxon>Pseudomonadati</taxon>
        <taxon>Pseudomonadota</taxon>
        <taxon>Gammaproteobacteria</taxon>
        <taxon>Enterobacterales</taxon>
        <taxon>Yersiniaceae</taxon>
        <taxon>Yersinia</taxon>
    </lineage>
</organism>